<proteinExistence type="inferred from homology"/>
<reference key="1">
    <citation type="journal article" date="2008" name="J. Bacteriol.">
        <title>The complete genome sequence of Escherichia coli DH10B: insights into the biology of a laboratory workhorse.</title>
        <authorList>
            <person name="Durfee T."/>
            <person name="Nelson R."/>
            <person name="Baldwin S."/>
            <person name="Plunkett G. III"/>
            <person name="Burland V."/>
            <person name="Mau B."/>
            <person name="Petrosino J.F."/>
            <person name="Qin X."/>
            <person name="Muzny D.M."/>
            <person name="Ayele M."/>
            <person name="Gibbs R.A."/>
            <person name="Csorgo B."/>
            <person name="Posfai G."/>
            <person name="Weinstock G.M."/>
            <person name="Blattner F.R."/>
        </authorList>
    </citation>
    <scope>NUCLEOTIDE SEQUENCE [LARGE SCALE GENOMIC DNA]</scope>
    <source>
        <strain>K12 / DH10B</strain>
    </source>
</reference>
<dbReference type="EMBL" id="CP000948">
    <property type="protein sequence ID" value="ACB04401.1"/>
    <property type="molecule type" value="Genomic_DNA"/>
</dbReference>
<dbReference type="SMR" id="B1X6J1"/>
<dbReference type="KEGG" id="ecd:ECDH10B_3516"/>
<dbReference type="HOGENOM" id="CLU_072226_1_1_6"/>
<dbReference type="GO" id="GO:0015935">
    <property type="term" value="C:small ribosomal subunit"/>
    <property type="evidence" value="ECO:0007669"/>
    <property type="project" value="InterPro"/>
</dbReference>
<dbReference type="GO" id="GO:0019843">
    <property type="term" value="F:rRNA binding"/>
    <property type="evidence" value="ECO:0007669"/>
    <property type="project" value="UniProtKB-UniRule"/>
</dbReference>
<dbReference type="GO" id="GO:0003735">
    <property type="term" value="F:structural constituent of ribosome"/>
    <property type="evidence" value="ECO:0007669"/>
    <property type="project" value="InterPro"/>
</dbReference>
<dbReference type="GO" id="GO:0000049">
    <property type="term" value="F:tRNA binding"/>
    <property type="evidence" value="ECO:0007669"/>
    <property type="project" value="UniProtKB-UniRule"/>
</dbReference>
<dbReference type="GO" id="GO:0006412">
    <property type="term" value="P:translation"/>
    <property type="evidence" value="ECO:0007669"/>
    <property type="project" value="UniProtKB-UniRule"/>
</dbReference>
<dbReference type="CDD" id="cd14869">
    <property type="entry name" value="uS7_Bacteria"/>
    <property type="match status" value="1"/>
</dbReference>
<dbReference type="FunFam" id="1.10.455.10:FF:000001">
    <property type="entry name" value="30S ribosomal protein S7"/>
    <property type="match status" value="1"/>
</dbReference>
<dbReference type="Gene3D" id="1.10.455.10">
    <property type="entry name" value="Ribosomal protein S7 domain"/>
    <property type="match status" value="1"/>
</dbReference>
<dbReference type="HAMAP" id="MF_00480_B">
    <property type="entry name" value="Ribosomal_uS7_B"/>
    <property type="match status" value="1"/>
</dbReference>
<dbReference type="InterPro" id="IPR000235">
    <property type="entry name" value="Ribosomal_uS7"/>
</dbReference>
<dbReference type="InterPro" id="IPR005717">
    <property type="entry name" value="Ribosomal_uS7_bac/org-type"/>
</dbReference>
<dbReference type="InterPro" id="IPR020606">
    <property type="entry name" value="Ribosomal_uS7_CS"/>
</dbReference>
<dbReference type="InterPro" id="IPR023798">
    <property type="entry name" value="Ribosomal_uS7_dom"/>
</dbReference>
<dbReference type="InterPro" id="IPR036823">
    <property type="entry name" value="Ribosomal_uS7_dom_sf"/>
</dbReference>
<dbReference type="NCBIfam" id="TIGR01029">
    <property type="entry name" value="rpsG_bact"/>
    <property type="match status" value="1"/>
</dbReference>
<dbReference type="PANTHER" id="PTHR11205">
    <property type="entry name" value="RIBOSOMAL PROTEIN S7"/>
    <property type="match status" value="1"/>
</dbReference>
<dbReference type="Pfam" id="PF00177">
    <property type="entry name" value="Ribosomal_S7"/>
    <property type="match status" value="1"/>
</dbReference>
<dbReference type="PIRSF" id="PIRSF002122">
    <property type="entry name" value="RPS7p_RPS7a_RPS5e_RPS7o"/>
    <property type="match status" value="1"/>
</dbReference>
<dbReference type="SUPFAM" id="SSF47973">
    <property type="entry name" value="Ribosomal protein S7"/>
    <property type="match status" value="1"/>
</dbReference>
<dbReference type="PROSITE" id="PS00052">
    <property type="entry name" value="RIBOSOMAL_S7"/>
    <property type="match status" value="1"/>
</dbReference>
<organism>
    <name type="scientific">Escherichia coli (strain K12 / DH10B)</name>
    <dbReference type="NCBI Taxonomy" id="316385"/>
    <lineage>
        <taxon>Bacteria</taxon>
        <taxon>Pseudomonadati</taxon>
        <taxon>Pseudomonadota</taxon>
        <taxon>Gammaproteobacteria</taxon>
        <taxon>Enterobacterales</taxon>
        <taxon>Enterobacteriaceae</taxon>
        <taxon>Escherichia</taxon>
    </lineage>
</organism>
<sequence>MPRRRVIGQRKILPDPKFGSELLAKFVNILMVDGKKSTAESIVYSALETLAQRSGKSELEAFEVALENVRPTVEVKSRRVGGSTYQVPVEVRPVRRNALAMRWIVEAARKRGDKSMALRLANELSDAAENKGTAVKKREDVHRMAEANKAFAHYRWLSLRSFSHQAGASSKQPALGYLN</sequence>
<feature type="chain" id="PRO_1000125940" description="Small ribosomal subunit protein uS7">
    <location>
        <begin position="1"/>
        <end position="179"/>
    </location>
</feature>
<gene>
    <name evidence="1" type="primary">rpsG</name>
    <name type="ordered locus">ECDH10B_3516</name>
</gene>
<protein>
    <recommendedName>
        <fullName evidence="1">Small ribosomal subunit protein uS7</fullName>
    </recommendedName>
    <alternativeName>
        <fullName evidence="2">30S ribosomal protein S7</fullName>
    </alternativeName>
</protein>
<comment type="function">
    <text evidence="1">One of the primary rRNA binding proteins, it binds directly to 16S rRNA where it nucleates assembly of the head domain of the 30S subunit. Is located at the subunit interface close to the decoding center, probably blocks exit of the E-site tRNA.</text>
</comment>
<comment type="subunit">
    <text evidence="1">Part of the 30S ribosomal subunit. Contacts proteins S9 and S11.</text>
</comment>
<comment type="similarity">
    <text evidence="1">Belongs to the universal ribosomal protein uS7 family.</text>
</comment>
<keyword id="KW-0687">Ribonucleoprotein</keyword>
<keyword id="KW-0689">Ribosomal protein</keyword>
<keyword id="KW-0694">RNA-binding</keyword>
<keyword id="KW-0699">rRNA-binding</keyword>
<keyword id="KW-0820">tRNA-binding</keyword>
<accession>B1X6J1</accession>
<name>RS7_ECODH</name>
<evidence type="ECO:0000255" key="1">
    <source>
        <dbReference type="HAMAP-Rule" id="MF_00480"/>
    </source>
</evidence>
<evidence type="ECO:0000305" key="2"/>